<accession>Q1AS35</accession>
<protein>
    <recommendedName>
        <fullName evidence="1">Argininosuccinate synthase</fullName>
        <ecNumber evidence="1">6.3.4.5</ecNumber>
    </recommendedName>
    <alternativeName>
        <fullName evidence="1">Citrulline--aspartate ligase</fullName>
    </alternativeName>
</protein>
<organism>
    <name type="scientific">Rubrobacter xylanophilus (strain DSM 9941 / JCM 11954 / NBRC 16129 / PRD-1)</name>
    <dbReference type="NCBI Taxonomy" id="266117"/>
    <lineage>
        <taxon>Bacteria</taxon>
        <taxon>Bacillati</taxon>
        <taxon>Actinomycetota</taxon>
        <taxon>Rubrobacteria</taxon>
        <taxon>Rubrobacterales</taxon>
        <taxon>Rubrobacteraceae</taxon>
        <taxon>Rubrobacter</taxon>
    </lineage>
</organism>
<evidence type="ECO:0000255" key="1">
    <source>
        <dbReference type="HAMAP-Rule" id="MF_00005"/>
    </source>
</evidence>
<proteinExistence type="inferred from homology"/>
<sequence length="409" mass="45122">MLGGKKVVLAYSGGLDTSVCLKWFEEQGAEPYALYLDLGQGEPAEDVREKALRIGAREVFVWDAREEFARDYVAPAIKANALYGGRYPLFTALGRPLIAKKLVEAARRVGATHIAHGSTGKGNDQVRFDVTTGSLAPDLTVVAPVRDWNMNRPEEIEYARKHGIPVPVTKESPYSVDQNLWGRSIEAGPLEDPEHEPTPDVFELTAEPEEAPDEPRYVEIGFERGLPTSLDGEKLPLVELIDRLNAIAGEHGVGRVDMIEDRLVGIKSREIYEAPAALVIIQAHRELESLTLTKDVLRFKPAVEQRFAELTYDGLWFTPLKSALDAFVEETQRTVTGSVRLKLYKGSSTVAGRSAPRALYSKDLATYDPESTFDESAAAGFIALWGLPARRWATVNPDPSQAPQPASRR</sequence>
<gene>
    <name evidence="1" type="primary">argG</name>
    <name type="ordered locus">Rxyl_2882</name>
</gene>
<feature type="chain" id="PRO_0000263967" description="Argininosuccinate synthase">
    <location>
        <begin position="1"/>
        <end position="409"/>
    </location>
</feature>
<feature type="binding site" evidence="1">
    <location>
        <begin position="10"/>
        <end position="18"/>
    </location>
    <ligand>
        <name>ATP</name>
        <dbReference type="ChEBI" id="CHEBI:30616"/>
    </ligand>
</feature>
<feature type="binding site" evidence="1">
    <location>
        <position position="87"/>
    </location>
    <ligand>
        <name>L-citrulline</name>
        <dbReference type="ChEBI" id="CHEBI:57743"/>
    </ligand>
</feature>
<feature type="binding site" evidence="1">
    <location>
        <position position="117"/>
    </location>
    <ligand>
        <name>ATP</name>
        <dbReference type="ChEBI" id="CHEBI:30616"/>
    </ligand>
</feature>
<feature type="binding site" evidence="1">
    <location>
        <position position="119"/>
    </location>
    <ligand>
        <name>L-aspartate</name>
        <dbReference type="ChEBI" id="CHEBI:29991"/>
    </ligand>
</feature>
<feature type="binding site" evidence="1">
    <location>
        <position position="123"/>
    </location>
    <ligand>
        <name>L-aspartate</name>
        <dbReference type="ChEBI" id="CHEBI:29991"/>
    </ligand>
</feature>
<feature type="binding site" evidence="1">
    <location>
        <position position="123"/>
    </location>
    <ligand>
        <name>L-citrulline</name>
        <dbReference type="ChEBI" id="CHEBI:57743"/>
    </ligand>
</feature>
<feature type="binding site" evidence="1">
    <location>
        <position position="124"/>
    </location>
    <ligand>
        <name>L-aspartate</name>
        <dbReference type="ChEBI" id="CHEBI:29991"/>
    </ligand>
</feature>
<feature type="binding site" evidence="1">
    <location>
        <position position="127"/>
    </location>
    <ligand>
        <name>L-citrulline</name>
        <dbReference type="ChEBI" id="CHEBI:57743"/>
    </ligand>
</feature>
<feature type="binding site" evidence="1">
    <location>
        <position position="175"/>
    </location>
    <ligand>
        <name>L-citrulline</name>
        <dbReference type="ChEBI" id="CHEBI:57743"/>
    </ligand>
</feature>
<feature type="binding site" evidence="1">
    <location>
        <position position="184"/>
    </location>
    <ligand>
        <name>L-citrulline</name>
        <dbReference type="ChEBI" id="CHEBI:57743"/>
    </ligand>
</feature>
<feature type="binding site" evidence="1">
    <location>
        <position position="260"/>
    </location>
    <ligand>
        <name>L-citrulline</name>
        <dbReference type="ChEBI" id="CHEBI:57743"/>
    </ligand>
</feature>
<feature type="binding site" evidence="1">
    <location>
        <position position="272"/>
    </location>
    <ligand>
        <name>L-citrulline</name>
        <dbReference type="ChEBI" id="CHEBI:57743"/>
    </ligand>
</feature>
<name>ASSY_RUBXD</name>
<keyword id="KW-0028">Amino-acid biosynthesis</keyword>
<keyword id="KW-0055">Arginine biosynthesis</keyword>
<keyword id="KW-0067">ATP-binding</keyword>
<keyword id="KW-0963">Cytoplasm</keyword>
<keyword id="KW-0436">Ligase</keyword>
<keyword id="KW-0547">Nucleotide-binding</keyword>
<keyword id="KW-1185">Reference proteome</keyword>
<reference key="1">
    <citation type="submission" date="2006-06" db="EMBL/GenBank/DDBJ databases">
        <title>Complete sequence of Rubrobacter xylanophilus DSM 9941.</title>
        <authorList>
            <consortium name="US DOE Joint Genome Institute"/>
            <person name="Copeland A."/>
            <person name="Lucas S."/>
            <person name="Lapidus A."/>
            <person name="Barry K."/>
            <person name="Detter J.C."/>
            <person name="Glavina del Rio T."/>
            <person name="Hammon N."/>
            <person name="Israni S."/>
            <person name="Dalin E."/>
            <person name="Tice H."/>
            <person name="Pitluck S."/>
            <person name="Munk A.C."/>
            <person name="Brettin T."/>
            <person name="Bruce D."/>
            <person name="Han C."/>
            <person name="Tapia R."/>
            <person name="Gilna P."/>
            <person name="Schmutz J."/>
            <person name="Larimer F."/>
            <person name="Land M."/>
            <person name="Hauser L."/>
            <person name="Kyrpides N."/>
            <person name="Lykidis A."/>
            <person name="da Costa M.S."/>
            <person name="Rainey F.A."/>
            <person name="Empadinhas N."/>
            <person name="Jolivet E."/>
            <person name="Battista J.R."/>
            <person name="Richardson P."/>
        </authorList>
    </citation>
    <scope>NUCLEOTIDE SEQUENCE [LARGE SCALE GENOMIC DNA]</scope>
    <source>
        <strain>DSM 9941 / JCM 11954 / NBRC 16129 / PRD-1</strain>
    </source>
</reference>
<comment type="catalytic activity">
    <reaction evidence="1">
        <text>L-citrulline + L-aspartate + ATP = 2-(N(omega)-L-arginino)succinate + AMP + diphosphate + H(+)</text>
        <dbReference type="Rhea" id="RHEA:10932"/>
        <dbReference type="ChEBI" id="CHEBI:15378"/>
        <dbReference type="ChEBI" id="CHEBI:29991"/>
        <dbReference type="ChEBI" id="CHEBI:30616"/>
        <dbReference type="ChEBI" id="CHEBI:33019"/>
        <dbReference type="ChEBI" id="CHEBI:57472"/>
        <dbReference type="ChEBI" id="CHEBI:57743"/>
        <dbReference type="ChEBI" id="CHEBI:456215"/>
        <dbReference type="EC" id="6.3.4.5"/>
    </reaction>
</comment>
<comment type="pathway">
    <text evidence="1">Amino-acid biosynthesis; L-arginine biosynthesis; L-arginine from L-ornithine and carbamoyl phosphate: step 2/3.</text>
</comment>
<comment type="subunit">
    <text evidence="1">Homotetramer.</text>
</comment>
<comment type="subcellular location">
    <subcellularLocation>
        <location evidence="1">Cytoplasm</location>
    </subcellularLocation>
</comment>
<comment type="similarity">
    <text evidence="1">Belongs to the argininosuccinate synthase family. Type 1 subfamily.</text>
</comment>
<dbReference type="EC" id="6.3.4.5" evidence="1"/>
<dbReference type="EMBL" id="CP000386">
    <property type="protein sequence ID" value="ABG05793.1"/>
    <property type="molecule type" value="Genomic_DNA"/>
</dbReference>
<dbReference type="RefSeq" id="WP_011565802.1">
    <property type="nucleotide sequence ID" value="NC_008148.1"/>
</dbReference>
<dbReference type="SMR" id="Q1AS35"/>
<dbReference type="STRING" id="266117.Rxyl_2882"/>
<dbReference type="KEGG" id="rxy:Rxyl_2882"/>
<dbReference type="eggNOG" id="COG0137">
    <property type="taxonomic scope" value="Bacteria"/>
</dbReference>
<dbReference type="HOGENOM" id="CLU_032784_4_2_11"/>
<dbReference type="OrthoDB" id="9801641at2"/>
<dbReference type="PhylomeDB" id="Q1AS35"/>
<dbReference type="UniPathway" id="UPA00068">
    <property type="reaction ID" value="UER00113"/>
</dbReference>
<dbReference type="Proteomes" id="UP000006637">
    <property type="component" value="Chromosome"/>
</dbReference>
<dbReference type="GO" id="GO:0005737">
    <property type="term" value="C:cytoplasm"/>
    <property type="evidence" value="ECO:0007669"/>
    <property type="project" value="UniProtKB-SubCell"/>
</dbReference>
<dbReference type="GO" id="GO:0004055">
    <property type="term" value="F:argininosuccinate synthase activity"/>
    <property type="evidence" value="ECO:0007669"/>
    <property type="project" value="UniProtKB-UniRule"/>
</dbReference>
<dbReference type="GO" id="GO:0005524">
    <property type="term" value="F:ATP binding"/>
    <property type="evidence" value="ECO:0007669"/>
    <property type="project" value="UniProtKB-UniRule"/>
</dbReference>
<dbReference type="GO" id="GO:0000053">
    <property type="term" value="P:argininosuccinate metabolic process"/>
    <property type="evidence" value="ECO:0007669"/>
    <property type="project" value="TreeGrafter"/>
</dbReference>
<dbReference type="GO" id="GO:0006526">
    <property type="term" value="P:L-arginine biosynthetic process"/>
    <property type="evidence" value="ECO:0007669"/>
    <property type="project" value="UniProtKB-UniRule"/>
</dbReference>
<dbReference type="GO" id="GO:0000050">
    <property type="term" value="P:urea cycle"/>
    <property type="evidence" value="ECO:0007669"/>
    <property type="project" value="TreeGrafter"/>
</dbReference>
<dbReference type="CDD" id="cd01999">
    <property type="entry name" value="ASS"/>
    <property type="match status" value="1"/>
</dbReference>
<dbReference type="FunFam" id="3.40.50.620:FF:000038">
    <property type="entry name" value="Argininosuccinate synthase"/>
    <property type="match status" value="1"/>
</dbReference>
<dbReference type="FunFam" id="3.90.1260.10:FF:000007">
    <property type="entry name" value="Argininosuccinate synthase"/>
    <property type="match status" value="1"/>
</dbReference>
<dbReference type="Gene3D" id="3.90.1260.10">
    <property type="entry name" value="Argininosuccinate synthetase, chain A, domain 2"/>
    <property type="match status" value="1"/>
</dbReference>
<dbReference type="Gene3D" id="3.40.50.620">
    <property type="entry name" value="HUPs"/>
    <property type="match status" value="1"/>
</dbReference>
<dbReference type="Gene3D" id="1.20.5.470">
    <property type="entry name" value="Single helix bin"/>
    <property type="match status" value="1"/>
</dbReference>
<dbReference type="HAMAP" id="MF_00005">
    <property type="entry name" value="Arg_succ_synth_type1"/>
    <property type="match status" value="1"/>
</dbReference>
<dbReference type="InterPro" id="IPR048268">
    <property type="entry name" value="Arginosuc_syn_C"/>
</dbReference>
<dbReference type="InterPro" id="IPR048267">
    <property type="entry name" value="Arginosuc_syn_N"/>
</dbReference>
<dbReference type="InterPro" id="IPR001518">
    <property type="entry name" value="Arginosuc_synth"/>
</dbReference>
<dbReference type="InterPro" id="IPR018223">
    <property type="entry name" value="Arginosuc_synth_CS"/>
</dbReference>
<dbReference type="InterPro" id="IPR023434">
    <property type="entry name" value="Arginosuc_synth_type_1_subfam"/>
</dbReference>
<dbReference type="InterPro" id="IPR024074">
    <property type="entry name" value="AS_cat/multimer_dom_body"/>
</dbReference>
<dbReference type="InterPro" id="IPR014729">
    <property type="entry name" value="Rossmann-like_a/b/a_fold"/>
</dbReference>
<dbReference type="NCBIfam" id="TIGR00032">
    <property type="entry name" value="argG"/>
    <property type="match status" value="1"/>
</dbReference>
<dbReference type="NCBIfam" id="NF001770">
    <property type="entry name" value="PRK00509.1"/>
    <property type="match status" value="1"/>
</dbReference>
<dbReference type="PANTHER" id="PTHR11587">
    <property type="entry name" value="ARGININOSUCCINATE SYNTHASE"/>
    <property type="match status" value="1"/>
</dbReference>
<dbReference type="PANTHER" id="PTHR11587:SF2">
    <property type="entry name" value="ARGININOSUCCINATE SYNTHASE"/>
    <property type="match status" value="1"/>
</dbReference>
<dbReference type="Pfam" id="PF20979">
    <property type="entry name" value="Arginosuc_syn_C"/>
    <property type="match status" value="1"/>
</dbReference>
<dbReference type="Pfam" id="PF00764">
    <property type="entry name" value="Arginosuc_synth"/>
    <property type="match status" value="1"/>
</dbReference>
<dbReference type="SUPFAM" id="SSF52402">
    <property type="entry name" value="Adenine nucleotide alpha hydrolases-like"/>
    <property type="match status" value="1"/>
</dbReference>
<dbReference type="SUPFAM" id="SSF69864">
    <property type="entry name" value="Argininosuccinate synthetase, C-terminal domain"/>
    <property type="match status" value="1"/>
</dbReference>
<dbReference type="PROSITE" id="PS00564">
    <property type="entry name" value="ARGININOSUCCIN_SYN_1"/>
    <property type="match status" value="1"/>
</dbReference>
<dbReference type="PROSITE" id="PS00565">
    <property type="entry name" value="ARGININOSUCCIN_SYN_2"/>
    <property type="match status" value="1"/>
</dbReference>